<name>EF1A1_MUCCL</name>
<proteinExistence type="inferred from homology"/>
<dbReference type="EMBL" id="J02605">
    <property type="protein sequence ID" value="AAA33424.1"/>
    <property type="molecule type" value="Genomic_DNA"/>
</dbReference>
<dbReference type="PIR" id="A25938">
    <property type="entry name" value="A25938"/>
</dbReference>
<dbReference type="SMR" id="P06805"/>
<dbReference type="GO" id="GO:0005737">
    <property type="term" value="C:cytoplasm"/>
    <property type="evidence" value="ECO:0007669"/>
    <property type="project" value="UniProtKB-SubCell"/>
</dbReference>
<dbReference type="GO" id="GO:0005525">
    <property type="term" value="F:GTP binding"/>
    <property type="evidence" value="ECO:0007669"/>
    <property type="project" value="UniProtKB-KW"/>
</dbReference>
<dbReference type="GO" id="GO:0003924">
    <property type="term" value="F:GTPase activity"/>
    <property type="evidence" value="ECO:0007669"/>
    <property type="project" value="InterPro"/>
</dbReference>
<dbReference type="GO" id="GO:0003746">
    <property type="term" value="F:translation elongation factor activity"/>
    <property type="evidence" value="ECO:0007669"/>
    <property type="project" value="UniProtKB-KW"/>
</dbReference>
<dbReference type="CDD" id="cd01883">
    <property type="entry name" value="EF1_alpha"/>
    <property type="match status" value="1"/>
</dbReference>
<dbReference type="CDD" id="cd03693">
    <property type="entry name" value="EF1_alpha_II"/>
    <property type="match status" value="1"/>
</dbReference>
<dbReference type="CDD" id="cd03705">
    <property type="entry name" value="EF1_alpha_III"/>
    <property type="match status" value="1"/>
</dbReference>
<dbReference type="FunFam" id="2.40.30.10:FF:000003">
    <property type="entry name" value="Elongation factor 1-alpha"/>
    <property type="match status" value="1"/>
</dbReference>
<dbReference type="FunFam" id="2.40.30.10:FF:000005">
    <property type="entry name" value="Elongation factor 1-alpha"/>
    <property type="match status" value="1"/>
</dbReference>
<dbReference type="FunFam" id="3.40.50.300:FF:000211">
    <property type="entry name" value="Elongation factor 1-alpha"/>
    <property type="match status" value="1"/>
</dbReference>
<dbReference type="Gene3D" id="3.40.50.300">
    <property type="entry name" value="P-loop containing nucleotide triphosphate hydrolases"/>
    <property type="match status" value="1"/>
</dbReference>
<dbReference type="Gene3D" id="2.40.30.10">
    <property type="entry name" value="Translation factors"/>
    <property type="match status" value="2"/>
</dbReference>
<dbReference type="HAMAP" id="MF_00118_A">
    <property type="entry name" value="EF_Tu_A"/>
    <property type="match status" value="1"/>
</dbReference>
<dbReference type="InterPro" id="IPR004161">
    <property type="entry name" value="EFTu-like_2"/>
</dbReference>
<dbReference type="InterPro" id="IPR031157">
    <property type="entry name" value="G_TR_CS"/>
</dbReference>
<dbReference type="InterPro" id="IPR054696">
    <property type="entry name" value="GTP-eEF1A_C"/>
</dbReference>
<dbReference type="InterPro" id="IPR027417">
    <property type="entry name" value="P-loop_NTPase"/>
</dbReference>
<dbReference type="InterPro" id="IPR000795">
    <property type="entry name" value="T_Tr_GTP-bd_dom"/>
</dbReference>
<dbReference type="InterPro" id="IPR050100">
    <property type="entry name" value="TRAFAC_GTPase_members"/>
</dbReference>
<dbReference type="InterPro" id="IPR009000">
    <property type="entry name" value="Transl_B-barrel_sf"/>
</dbReference>
<dbReference type="InterPro" id="IPR009001">
    <property type="entry name" value="Transl_elong_EF1A/Init_IF2_C"/>
</dbReference>
<dbReference type="InterPro" id="IPR004539">
    <property type="entry name" value="Transl_elong_EF1A_euk/arc"/>
</dbReference>
<dbReference type="NCBIfam" id="TIGR00483">
    <property type="entry name" value="EF-1_alpha"/>
    <property type="match status" value="1"/>
</dbReference>
<dbReference type="NCBIfam" id="NF008969">
    <property type="entry name" value="PRK12317.1"/>
    <property type="match status" value="1"/>
</dbReference>
<dbReference type="PANTHER" id="PTHR23115">
    <property type="entry name" value="TRANSLATION FACTOR"/>
    <property type="match status" value="1"/>
</dbReference>
<dbReference type="Pfam" id="PF22594">
    <property type="entry name" value="GTP-eEF1A_C"/>
    <property type="match status" value="1"/>
</dbReference>
<dbReference type="Pfam" id="PF00009">
    <property type="entry name" value="GTP_EFTU"/>
    <property type="match status" value="1"/>
</dbReference>
<dbReference type="Pfam" id="PF03144">
    <property type="entry name" value="GTP_EFTU_D2"/>
    <property type="match status" value="1"/>
</dbReference>
<dbReference type="PRINTS" id="PR00315">
    <property type="entry name" value="ELONGATNFCT"/>
</dbReference>
<dbReference type="SUPFAM" id="SSF50465">
    <property type="entry name" value="EF-Tu/eEF-1alpha/eIF2-gamma C-terminal domain"/>
    <property type="match status" value="1"/>
</dbReference>
<dbReference type="SUPFAM" id="SSF52540">
    <property type="entry name" value="P-loop containing nucleoside triphosphate hydrolases"/>
    <property type="match status" value="1"/>
</dbReference>
<dbReference type="SUPFAM" id="SSF50447">
    <property type="entry name" value="Translation proteins"/>
    <property type="match status" value="1"/>
</dbReference>
<dbReference type="PROSITE" id="PS00301">
    <property type="entry name" value="G_TR_1"/>
    <property type="match status" value="1"/>
</dbReference>
<dbReference type="PROSITE" id="PS51722">
    <property type="entry name" value="G_TR_2"/>
    <property type="match status" value="1"/>
</dbReference>
<organism>
    <name type="scientific">Mucor circinelloides f. lusitanicus</name>
    <name type="common">Mucor racemosus var. lusitanicus</name>
    <dbReference type="NCBI Taxonomy" id="29924"/>
    <lineage>
        <taxon>Eukaryota</taxon>
        <taxon>Fungi</taxon>
        <taxon>Fungi incertae sedis</taxon>
        <taxon>Mucoromycota</taxon>
        <taxon>Mucoromycotina</taxon>
        <taxon>Mucoromycetes</taxon>
        <taxon>Mucorales</taxon>
        <taxon>Mucorineae</taxon>
        <taxon>Mucoraceae</taxon>
        <taxon>Mucor</taxon>
    </lineage>
</organism>
<evidence type="ECO:0000250" key="1"/>
<evidence type="ECO:0000250" key="2">
    <source>
        <dbReference type="UniProtKB" id="P02994"/>
    </source>
</evidence>
<evidence type="ECO:0000305" key="3"/>
<protein>
    <recommendedName>
        <fullName>Elongation factor 1-alpha</fullName>
        <shortName>EF-1-alpha</shortName>
    </recommendedName>
</protein>
<feature type="initiator methionine" description="Removed" evidence="2">
    <location>
        <position position="1"/>
    </location>
</feature>
<feature type="chain" id="PRO_0000090964" description="Elongation factor 1-alpha">
    <location>
        <begin position="2"/>
        <end position="458"/>
    </location>
</feature>
<feature type="domain" description="tr-type G">
    <location>
        <begin position="5"/>
        <end position="240"/>
    </location>
</feature>
<feature type="region of interest" description="G1" evidence="1">
    <location>
        <begin position="14"/>
        <end position="21"/>
    </location>
</feature>
<feature type="region of interest" description="G2" evidence="1">
    <location>
        <begin position="70"/>
        <end position="74"/>
    </location>
</feature>
<feature type="region of interest" description="G3" evidence="1">
    <location>
        <begin position="91"/>
        <end position="94"/>
    </location>
</feature>
<feature type="region of interest" description="G4" evidence="1">
    <location>
        <begin position="153"/>
        <end position="156"/>
    </location>
</feature>
<feature type="region of interest" description="G5" evidence="1">
    <location>
        <begin position="192"/>
        <end position="194"/>
    </location>
</feature>
<feature type="binding site" evidence="1">
    <location>
        <begin position="14"/>
        <end position="21"/>
    </location>
    <ligand>
        <name>GTP</name>
        <dbReference type="ChEBI" id="CHEBI:37565"/>
    </ligand>
</feature>
<feature type="binding site" evidence="1">
    <location>
        <begin position="91"/>
        <end position="95"/>
    </location>
    <ligand>
        <name>GTP</name>
        <dbReference type="ChEBI" id="CHEBI:37565"/>
    </ligand>
</feature>
<feature type="binding site" evidence="1">
    <location>
        <begin position="153"/>
        <end position="156"/>
    </location>
    <ligand>
        <name>GTP</name>
        <dbReference type="ChEBI" id="CHEBI:37565"/>
    </ligand>
</feature>
<feature type="modified residue" description="N,N,N-trimethylglycine" evidence="2">
    <location>
        <position position="2"/>
    </location>
</feature>
<feature type="modified residue" description="N6,N6-dimethyllysine; alternate" evidence="2">
    <location>
        <position position="3"/>
    </location>
</feature>
<feature type="modified residue" description="N6-methyllysine; alternate" evidence="2">
    <location>
        <position position="3"/>
    </location>
</feature>
<feature type="modified residue" description="N6-methyllysine" evidence="2">
    <location>
        <position position="30"/>
    </location>
</feature>
<feature type="modified residue" description="N6,N6,N6-trimethyllysine" evidence="2">
    <location>
        <position position="79"/>
    </location>
</feature>
<feature type="modified residue" description="N6,N6-dimethyllysine; alternate" evidence="2">
    <location>
        <position position="316"/>
    </location>
</feature>
<feature type="modified residue" description="N6-methyllysine; alternate" evidence="2">
    <location>
        <position position="316"/>
    </location>
</feature>
<feature type="modified residue" description="N6-methyllysine" evidence="2">
    <location>
        <position position="390"/>
    </location>
</feature>
<keyword id="KW-0963">Cytoplasm</keyword>
<keyword id="KW-0251">Elongation factor</keyword>
<keyword id="KW-0342">GTP-binding</keyword>
<keyword id="KW-0488">Methylation</keyword>
<keyword id="KW-0547">Nucleotide-binding</keyword>
<keyword id="KW-0648">Protein biosynthesis</keyword>
<reference key="1">
    <citation type="journal article" date="1986" name="J. Biol. Chem.">
        <title>The primary structure and the functional domains of an elongation factor-1 alpha from Mucor racemosus.</title>
        <authorList>
            <person name="Linz J.E."/>
            <person name="Lira L.M."/>
            <person name="Sypherd P.S."/>
        </authorList>
    </citation>
    <scope>NUCLEOTIDE SEQUENCE [GENOMIC DNA]</scope>
    <source>
        <strain>ATCC 1216b / BCRC 32522 / CBS 277.49 / NRRL 3631</strain>
    </source>
</reference>
<comment type="function">
    <text>This protein promotes the GTP-dependent binding of aminoacyl-tRNA to the A-site of ribosomes during protein biosynthesis.</text>
</comment>
<comment type="subcellular location">
    <subcellularLocation>
        <location>Cytoplasm</location>
    </subcellularLocation>
</comment>
<comment type="similarity">
    <text evidence="3">Belongs to the TRAFAC class translation factor GTPase superfamily. Classic translation factor GTPase family. EF-Tu/EF-1A subfamily.</text>
</comment>
<accession>P06805</accession>
<gene>
    <name type="primary">TEF-1</name>
</gene>
<sequence length="458" mass="49942">MGKEKTHVNVVVIGHVDSGKSTTTGHLIYKCGGIDKRTIEEFEKEAAELGKGSFKYAWVLDKLKAERERGITIDIALWKFETPKYNVTVIDAPGHRDFIKNMITGTSQADCAILIIAGGTGEFEAGISKDGQTREHALLAFTLGFRQLIVAINKMDTTKWSQDRYNEIVKEVSGFIKKIGFNPKSVPFVPISGWHGDNMLDESTNMPWFKGWNKETKAGSKTGKTLLEAIDAIEPPVRPSDKPLRLPLQDVYKIGGIGTVPVGRVETGTIKAGMVVNFAPAAVTTEVKSVEMHHETLTEGLPGDNVGFNVKNVSVKDIRRGNVCSDSKNDPAKESASFTAQVIILNHPGQISAGYAPVLDCHTAHIACKFSELIEKIDRRSGKKMEDSPKFVKSGDSAIVKMVPSKPMCVEAYTDYPPLGRFAVRDMRQTVAVGVIKAVEKVDKAGKVTKAAAKASKK</sequence>